<organism>
    <name type="scientific">Escherichia coli O81 (strain ED1a)</name>
    <dbReference type="NCBI Taxonomy" id="585397"/>
    <lineage>
        <taxon>Bacteria</taxon>
        <taxon>Pseudomonadati</taxon>
        <taxon>Pseudomonadota</taxon>
        <taxon>Gammaproteobacteria</taxon>
        <taxon>Enterobacterales</taxon>
        <taxon>Enterobacteriaceae</taxon>
        <taxon>Escherichia</taxon>
    </lineage>
</organism>
<gene>
    <name evidence="1" type="primary">rodZ</name>
    <name type="ordered locus">ECED1_2947</name>
</gene>
<feature type="chain" id="PRO_1000189540" description="Cytoskeleton protein RodZ">
    <location>
        <begin position="1"/>
        <end position="335"/>
    </location>
</feature>
<feature type="topological domain" description="Cytoplasmic" evidence="1">
    <location>
        <begin position="1"/>
        <end position="111"/>
    </location>
</feature>
<feature type="transmembrane region" description="Helical; Signal-anchor for type II membrane protein" evidence="1">
    <location>
        <begin position="112"/>
        <end position="132"/>
    </location>
</feature>
<feature type="topological domain" description="Periplasmic" evidence="1">
    <location>
        <begin position="133"/>
        <end position="335"/>
    </location>
</feature>
<feature type="domain" description="HTH cro/C1-type" evidence="1">
    <location>
        <begin position="19"/>
        <end position="71"/>
    </location>
</feature>
<feature type="DNA-binding region" description="H-T-H motif" evidence="1">
    <location>
        <begin position="30"/>
        <end position="49"/>
    </location>
</feature>
<feature type="region of interest" description="Disordered" evidence="2">
    <location>
        <begin position="148"/>
        <end position="244"/>
    </location>
</feature>
<feature type="compositionally biased region" description="Polar residues" evidence="2">
    <location>
        <begin position="148"/>
        <end position="164"/>
    </location>
</feature>
<feature type="compositionally biased region" description="Low complexity" evidence="2">
    <location>
        <begin position="165"/>
        <end position="205"/>
    </location>
</feature>
<feature type="compositionally biased region" description="Low complexity" evidence="2">
    <location>
        <begin position="217"/>
        <end position="239"/>
    </location>
</feature>
<reference key="1">
    <citation type="journal article" date="2009" name="PLoS Genet.">
        <title>Organised genome dynamics in the Escherichia coli species results in highly diverse adaptive paths.</title>
        <authorList>
            <person name="Touchon M."/>
            <person name="Hoede C."/>
            <person name="Tenaillon O."/>
            <person name="Barbe V."/>
            <person name="Baeriswyl S."/>
            <person name="Bidet P."/>
            <person name="Bingen E."/>
            <person name="Bonacorsi S."/>
            <person name="Bouchier C."/>
            <person name="Bouvet O."/>
            <person name="Calteau A."/>
            <person name="Chiapello H."/>
            <person name="Clermont O."/>
            <person name="Cruveiller S."/>
            <person name="Danchin A."/>
            <person name="Diard M."/>
            <person name="Dossat C."/>
            <person name="Karoui M.E."/>
            <person name="Frapy E."/>
            <person name="Garry L."/>
            <person name="Ghigo J.M."/>
            <person name="Gilles A.M."/>
            <person name="Johnson J."/>
            <person name="Le Bouguenec C."/>
            <person name="Lescat M."/>
            <person name="Mangenot S."/>
            <person name="Martinez-Jehanne V."/>
            <person name="Matic I."/>
            <person name="Nassif X."/>
            <person name="Oztas S."/>
            <person name="Petit M.A."/>
            <person name="Pichon C."/>
            <person name="Rouy Z."/>
            <person name="Ruf C.S."/>
            <person name="Schneider D."/>
            <person name="Tourret J."/>
            <person name="Vacherie B."/>
            <person name="Vallenet D."/>
            <person name="Medigue C."/>
            <person name="Rocha E.P.C."/>
            <person name="Denamur E."/>
        </authorList>
    </citation>
    <scope>NUCLEOTIDE SEQUENCE [LARGE SCALE GENOMIC DNA]</scope>
    <source>
        <strain>ED1a</strain>
    </source>
</reference>
<dbReference type="EMBL" id="CU928162">
    <property type="protein sequence ID" value="CAR09117.2"/>
    <property type="molecule type" value="Genomic_DNA"/>
</dbReference>
<dbReference type="RefSeq" id="WP_001090838.1">
    <property type="nucleotide sequence ID" value="NC_011745.1"/>
</dbReference>
<dbReference type="SMR" id="B7MYF1"/>
<dbReference type="KEGG" id="ecq:ECED1_2947"/>
<dbReference type="HOGENOM" id="CLU_047530_3_1_6"/>
<dbReference type="Proteomes" id="UP000000748">
    <property type="component" value="Chromosome"/>
</dbReference>
<dbReference type="GO" id="GO:0005886">
    <property type="term" value="C:plasma membrane"/>
    <property type="evidence" value="ECO:0007669"/>
    <property type="project" value="UniProtKB-SubCell"/>
</dbReference>
<dbReference type="GO" id="GO:0003677">
    <property type="term" value="F:DNA binding"/>
    <property type="evidence" value="ECO:0007669"/>
    <property type="project" value="UniProtKB-KW"/>
</dbReference>
<dbReference type="GO" id="GO:0008360">
    <property type="term" value="P:regulation of cell shape"/>
    <property type="evidence" value="ECO:0007669"/>
    <property type="project" value="UniProtKB-UniRule"/>
</dbReference>
<dbReference type="CDD" id="cd00093">
    <property type="entry name" value="HTH_XRE"/>
    <property type="match status" value="1"/>
</dbReference>
<dbReference type="FunFam" id="1.10.260.40:FF:000014">
    <property type="entry name" value="Cytoskeleton protein RodZ"/>
    <property type="match status" value="1"/>
</dbReference>
<dbReference type="Gene3D" id="1.10.260.40">
    <property type="entry name" value="lambda repressor-like DNA-binding domains"/>
    <property type="match status" value="1"/>
</dbReference>
<dbReference type="HAMAP" id="MF_02017">
    <property type="entry name" value="RodZ"/>
    <property type="match status" value="1"/>
</dbReference>
<dbReference type="InterPro" id="IPR050400">
    <property type="entry name" value="Bact_Cytoskel_RodZ"/>
</dbReference>
<dbReference type="InterPro" id="IPR001387">
    <property type="entry name" value="Cro/C1-type_HTH"/>
</dbReference>
<dbReference type="InterPro" id="IPR010982">
    <property type="entry name" value="Lambda_DNA-bd_dom_sf"/>
</dbReference>
<dbReference type="InterPro" id="IPR023690">
    <property type="entry name" value="RodZ"/>
</dbReference>
<dbReference type="InterPro" id="IPR025194">
    <property type="entry name" value="RodZ-like_C"/>
</dbReference>
<dbReference type="NCBIfam" id="NF008109">
    <property type="entry name" value="PRK10856.1"/>
    <property type="match status" value="1"/>
</dbReference>
<dbReference type="PANTHER" id="PTHR34475">
    <property type="match status" value="1"/>
</dbReference>
<dbReference type="PANTHER" id="PTHR34475:SF1">
    <property type="entry name" value="CYTOSKELETON PROTEIN RODZ"/>
    <property type="match status" value="1"/>
</dbReference>
<dbReference type="Pfam" id="PF13413">
    <property type="entry name" value="HTH_25"/>
    <property type="match status" value="1"/>
</dbReference>
<dbReference type="Pfam" id="PF13464">
    <property type="entry name" value="RodZ_C"/>
    <property type="match status" value="1"/>
</dbReference>
<dbReference type="SMART" id="SM00530">
    <property type="entry name" value="HTH_XRE"/>
    <property type="match status" value="1"/>
</dbReference>
<dbReference type="SUPFAM" id="SSF47413">
    <property type="entry name" value="lambda repressor-like DNA-binding domains"/>
    <property type="match status" value="1"/>
</dbReference>
<dbReference type="PROSITE" id="PS50943">
    <property type="entry name" value="HTH_CROC1"/>
    <property type="match status" value="1"/>
</dbReference>
<comment type="function">
    <text evidence="1">Cytoskeletal protein that is involved in cell-shape control through regulation of the length of the long axis.</text>
</comment>
<comment type="subcellular location">
    <subcellularLocation>
        <location evidence="1">Cell inner membrane</location>
        <topology evidence="1">Single-pass type II membrane protein</topology>
    </subcellularLocation>
    <text evidence="1">Forms helical filaments along the long axis of the cell.</text>
</comment>
<comment type="domain">
    <text evidence="1">The helix-turn-helix (HTH) motif in the cytoplasmic domain of the N-terminus is involved in the formation of spirals to maintain the rigid rod shape. As this protein is anchored in the cytoplasmic membrane, the HTH motif may contribute to protein-protein interactions to form the RodZ helix, which is localized beneath the cytoplasmic membrane. The C-terminal domain may be critical for determination of the rod shape by probably interacting with enzymes required for synthesis of the peptidoglycan layer, including PBPs in the periplasm.</text>
</comment>
<comment type="similarity">
    <text evidence="1">Belongs to the RodZ family.</text>
</comment>
<sequence>MNTEATHDQNEALTTGARLRNAREQLGLSQQAVAERLCLKVSTVRDIEEDKAPADLASTFLRGYIRSYARLVHIPEEELLPGLEKQAPLRAAKVAPMQSFSLGKRRKKRDGWLMTFTWLVLFVVIGLSGAWWWQDHKAQQEEITTMADQSSAELNNNQSQSVPLDTSTTTDQAMATTPTSPVDTTATNTQTPAVTAPAPAVDPQQNAVVPPSQANVDTAATPAPAATTTPDSAAPLPTDQAGVTTPAVDPNALVMNFTADCWLEVTDATGKKLFSGMQRKDGNLNLTGQAPYKLKIGAPAAVQIQYQGKPVDLSRFIRTNQVARLTLNAEQSPAQ</sequence>
<proteinExistence type="inferred from homology"/>
<keyword id="KW-0997">Cell inner membrane</keyword>
<keyword id="KW-1003">Cell membrane</keyword>
<keyword id="KW-0133">Cell shape</keyword>
<keyword id="KW-0238">DNA-binding</keyword>
<keyword id="KW-0472">Membrane</keyword>
<keyword id="KW-0735">Signal-anchor</keyword>
<keyword id="KW-0812">Transmembrane</keyword>
<keyword id="KW-1133">Transmembrane helix</keyword>
<evidence type="ECO:0000255" key="1">
    <source>
        <dbReference type="HAMAP-Rule" id="MF_02017"/>
    </source>
</evidence>
<evidence type="ECO:0000256" key="2">
    <source>
        <dbReference type="SAM" id="MobiDB-lite"/>
    </source>
</evidence>
<protein>
    <recommendedName>
        <fullName evidence="1">Cytoskeleton protein RodZ</fullName>
    </recommendedName>
</protein>
<name>RODZ_ECO81</name>
<accession>B7MYF1</accession>